<protein>
    <recommendedName>
        <fullName>Serine/threonine-protein kinase H1</fullName>
        <ecNumber>2.7.11.1</ecNumber>
    </recommendedName>
    <alternativeName>
        <fullName>Protein serine kinase H1</fullName>
        <shortName>PSK-H1</shortName>
    </alternativeName>
</protein>
<comment type="function">
    <text evidence="1">May be a SFC-associated serine kinase (splicing factor compartment-associated serine kinase) with a role in intranuclear SR protein (non-snRNP splicing factors containing a serine/arginine-rich domain) trafficking and pre-mRNA processing.</text>
</comment>
<comment type="catalytic activity">
    <reaction>
        <text>L-seryl-[protein] + ATP = O-phospho-L-seryl-[protein] + ADP + H(+)</text>
        <dbReference type="Rhea" id="RHEA:17989"/>
        <dbReference type="Rhea" id="RHEA-COMP:9863"/>
        <dbReference type="Rhea" id="RHEA-COMP:11604"/>
        <dbReference type="ChEBI" id="CHEBI:15378"/>
        <dbReference type="ChEBI" id="CHEBI:29999"/>
        <dbReference type="ChEBI" id="CHEBI:30616"/>
        <dbReference type="ChEBI" id="CHEBI:83421"/>
        <dbReference type="ChEBI" id="CHEBI:456216"/>
        <dbReference type="EC" id="2.7.11.1"/>
    </reaction>
</comment>
<comment type="catalytic activity">
    <reaction>
        <text>L-threonyl-[protein] + ATP = O-phospho-L-threonyl-[protein] + ADP + H(+)</text>
        <dbReference type="Rhea" id="RHEA:46608"/>
        <dbReference type="Rhea" id="RHEA-COMP:11060"/>
        <dbReference type="Rhea" id="RHEA-COMP:11605"/>
        <dbReference type="ChEBI" id="CHEBI:15378"/>
        <dbReference type="ChEBI" id="CHEBI:30013"/>
        <dbReference type="ChEBI" id="CHEBI:30616"/>
        <dbReference type="ChEBI" id="CHEBI:61977"/>
        <dbReference type="ChEBI" id="CHEBI:456216"/>
        <dbReference type="EC" id="2.7.11.1"/>
    </reaction>
</comment>
<comment type="activity regulation">
    <text evidence="1">Activity depends on Ca(2+) concentration.</text>
</comment>
<comment type="subunit">
    <text evidence="1">Homodimer.</text>
</comment>
<comment type="subcellular location">
    <subcellularLocation>
        <location evidence="1">Golgi apparatus</location>
    </subcellularLocation>
    <subcellularLocation>
        <location evidence="1">Cytoplasm</location>
        <location evidence="1">Cytoskeleton</location>
        <location evidence="1">Microtubule organizing center</location>
        <location evidence="1">Centrosome</location>
    </subcellularLocation>
    <subcellularLocation>
        <location evidence="1">Nucleus speckle</location>
    </subcellularLocation>
    <subcellularLocation>
        <location evidence="1">Endoplasmic reticulum membrane</location>
        <topology evidence="1">Lipid-anchor</topology>
    </subcellularLocation>
    <subcellularLocation>
        <location evidence="1">Cell membrane</location>
        <topology evidence="1">Lipid-anchor</topology>
    </subcellularLocation>
    <subcellularLocation>
        <location evidence="1">Cytoplasm</location>
    </subcellularLocation>
    <text evidence="1">Localized in the brefeldin A- sensitive Golgi compartment, at centrosomes, in the nucleus with a somewhat speckle-like presence, membrane-associated to the endoplasmic reticulum (ER) and the plasma membrane (PM), and more diffusely in the cytoplasm. Found to concentrate in splicing factor compartments (SFCs) within the nucleus of interphase cells. The acylation-negative form may be only cytoplasmic and nuclear. Acylation seems to allow the sequestering to the intracellular membranes. Myristoylation may mediate targeting to the intracellular non-Golgi membranes and palmitoylation may mediate the targeting to the Golgi membranes. Dual acylation is required to stabilize the interaction with Golgi membranes (By similarity).</text>
</comment>
<comment type="PTM">
    <text evidence="1">Autophosphorylated on serine residues.</text>
</comment>
<comment type="PTM">
    <text evidence="1">Myristoylated. Required for membrane association. Prerequisite for palmitoylation to occur (By similarity).</text>
</comment>
<comment type="PTM">
    <text evidence="1">Palmitoylated.</text>
</comment>
<comment type="similarity">
    <text evidence="6">Belongs to the protein kinase superfamily. CAMK Ser/Thr protein kinase family.</text>
</comment>
<keyword id="KW-0067">ATP-binding</keyword>
<keyword id="KW-1003">Cell membrane</keyword>
<keyword id="KW-0963">Cytoplasm</keyword>
<keyword id="KW-0206">Cytoskeleton</keyword>
<keyword id="KW-0256">Endoplasmic reticulum</keyword>
<keyword id="KW-0333">Golgi apparatus</keyword>
<keyword id="KW-0418">Kinase</keyword>
<keyword id="KW-0449">Lipoprotein</keyword>
<keyword id="KW-0472">Membrane</keyword>
<keyword id="KW-0519">Myristate</keyword>
<keyword id="KW-0547">Nucleotide-binding</keyword>
<keyword id="KW-0539">Nucleus</keyword>
<keyword id="KW-0564">Palmitate</keyword>
<keyword id="KW-0597">Phosphoprotein</keyword>
<keyword id="KW-1185">Reference proteome</keyword>
<keyword id="KW-0723">Serine/threonine-protein kinase</keyword>
<keyword id="KW-0808">Transferase</keyword>
<evidence type="ECO:0000250" key="1"/>
<evidence type="ECO:0000255" key="2"/>
<evidence type="ECO:0000255" key="3">
    <source>
        <dbReference type="PROSITE-ProRule" id="PRU00159"/>
    </source>
</evidence>
<evidence type="ECO:0000255" key="4">
    <source>
        <dbReference type="PROSITE-ProRule" id="PRU10027"/>
    </source>
</evidence>
<evidence type="ECO:0000256" key="5">
    <source>
        <dbReference type="SAM" id="MobiDB-lite"/>
    </source>
</evidence>
<evidence type="ECO:0000305" key="6"/>
<reference key="1">
    <citation type="journal article" date="2005" name="BMC Genomics">
        <title>Characterization of 954 bovine full-CDS cDNA sequences.</title>
        <authorList>
            <person name="Harhay G.P."/>
            <person name="Sonstegard T.S."/>
            <person name="Keele J.W."/>
            <person name="Heaton M.P."/>
            <person name="Clawson M.L."/>
            <person name="Snelling W.M."/>
            <person name="Wiedmann R.T."/>
            <person name="Van Tassell C.P."/>
            <person name="Smith T.P.L."/>
        </authorList>
    </citation>
    <scope>NUCLEOTIDE SEQUENCE [LARGE SCALE MRNA]</scope>
</reference>
<dbReference type="EC" id="2.7.11.1"/>
<dbReference type="EMBL" id="BT026549">
    <property type="protein sequence ID" value="ABH06336.1"/>
    <property type="molecule type" value="mRNA"/>
</dbReference>
<dbReference type="RefSeq" id="NP_001068881.1">
    <property type="nucleotide sequence ID" value="NM_001075413.1"/>
</dbReference>
<dbReference type="SMR" id="Q0V7M1"/>
<dbReference type="FunCoup" id="Q0V7M1">
    <property type="interactions" value="660"/>
</dbReference>
<dbReference type="STRING" id="9913.ENSBTAP00000024011"/>
<dbReference type="PaxDb" id="9913-ENSBTAP00000024011"/>
<dbReference type="Ensembl" id="ENSBTAT00000024011.5">
    <property type="protein sequence ID" value="ENSBTAP00000024011.3"/>
    <property type="gene ID" value="ENSBTAG00000018037.5"/>
</dbReference>
<dbReference type="GeneID" id="509656"/>
<dbReference type="KEGG" id="bta:509656"/>
<dbReference type="CTD" id="5681"/>
<dbReference type="VEuPathDB" id="HostDB:ENSBTAG00000018037"/>
<dbReference type="VGNC" id="VGNC:33437">
    <property type="gene designation" value="PSKH1"/>
</dbReference>
<dbReference type="eggNOG" id="KOG0032">
    <property type="taxonomic scope" value="Eukaryota"/>
</dbReference>
<dbReference type="GeneTree" id="ENSGT00940000157041"/>
<dbReference type="HOGENOM" id="CLU_000288_63_0_1"/>
<dbReference type="InParanoid" id="Q0V7M1"/>
<dbReference type="OMA" id="SYAGEHW"/>
<dbReference type="OrthoDB" id="40902at2759"/>
<dbReference type="TreeFam" id="TF314166"/>
<dbReference type="Proteomes" id="UP000009136">
    <property type="component" value="Chromosome 18"/>
</dbReference>
<dbReference type="Bgee" id="ENSBTAG00000018037">
    <property type="expression patterns" value="Expressed in choroid plexus and 105 other cell types or tissues"/>
</dbReference>
<dbReference type="GO" id="GO:0005813">
    <property type="term" value="C:centrosome"/>
    <property type="evidence" value="ECO:0007669"/>
    <property type="project" value="UniProtKB-SubCell"/>
</dbReference>
<dbReference type="GO" id="GO:0005929">
    <property type="term" value="C:cilium"/>
    <property type="evidence" value="ECO:0007669"/>
    <property type="project" value="Ensembl"/>
</dbReference>
<dbReference type="GO" id="GO:0005737">
    <property type="term" value="C:cytoplasm"/>
    <property type="evidence" value="ECO:0000318"/>
    <property type="project" value="GO_Central"/>
</dbReference>
<dbReference type="GO" id="GO:0005829">
    <property type="term" value="C:cytosol"/>
    <property type="evidence" value="ECO:0007669"/>
    <property type="project" value="Ensembl"/>
</dbReference>
<dbReference type="GO" id="GO:0005789">
    <property type="term" value="C:endoplasmic reticulum membrane"/>
    <property type="evidence" value="ECO:0007669"/>
    <property type="project" value="UniProtKB-SubCell"/>
</dbReference>
<dbReference type="GO" id="GO:0005794">
    <property type="term" value="C:Golgi apparatus"/>
    <property type="evidence" value="ECO:0007669"/>
    <property type="project" value="UniProtKB-SubCell"/>
</dbReference>
<dbReference type="GO" id="GO:0016607">
    <property type="term" value="C:nuclear speck"/>
    <property type="evidence" value="ECO:0007669"/>
    <property type="project" value="UniProtKB-SubCell"/>
</dbReference>
<dbReference type="GO" id="GO:0005886">
    <property type="term" value="C:plasma membrane"/>
    <property type="evidence" value="ECO:0007669"/>
    <property type="project" value="UniProtKB-SubCell"/>
</dbReference>
<dbReference type="GO" id="GO:0005524">
    <property type="term" value="F:ATP binding"/>
    <property type="evidence" value="ECO:0007669"/>
    <property type="project" value="UniProtKB-KW"/>
</dbReference>
<dbReference type="GO" id="GO:0106310">
    <property type="term" value="F:protein serine kinase activity"/>
    <property type="evidence" value="ECO:0007669"/>
    <property type="project" value="RHEA"/>
</dbReference>
<dbReference type="GO" id="GO:0004674">
    <property type="term" value="F:protein serine/threonine kinase activity"/>
    <property type="evidence" value="ECO:0000318"/>
    <property type="project" value="GO_Central"/>
</dbReference>
<dbReference type="GO" id="GO:0007368">
    <property type="term" value="P:determination of left/right symmetry"/>
    <property type="evidence" value="ECO:0007669"/>
    <property type="project" value="Ensembl"/>
</dbReference>
<dbReference type="GO" id="GO:0007507">
    <property type="term" value="P:heart development"/>
    <property type="evidence" value="ECO:0007669"/>
    <property type="project" value="Ensembl"/>
</dbReference>
<dbReference type="CDD" id="cd14087">
    <property type="entry name" value="STKc_PSKH1"/>
    <property type="match status" value="1"/>
</dbReference>
<dbReference type="FunFam" id="1.10.510.10:FF:000416">
    <property type="entry name" value="Serine/threonine-protein kinase H1"/>
    <property type="match status" value="1"/>
</dbReference>
<dbReference type="Gene3D" id="1.10.510.10">
    <property type="entry name" value="Transferase(Phosphotransferase) domain 1"/>
    <property type="match status" value="1"/>
</dbReference>
<dbReference type="InterPro" id="IPR011009">
    <property type="entry name" value="Kinase-like_dom_sf"/>
</dbReference>
<dbReference type="InterPro" id="IPR000719">
    <property type="entry name" value="Prot_kinase_dom"/>
</dbReference>
<dbReference type="InterPro" id="IPR017441">
    <property type="entry name" value="Protein_kinase_ATP_BS"/>
</dbReference>
<dbReference type="InterPro" id="IPR008271">
    <property type="entry name" value="Ser/Thr_kinase_AS"/>
</dbReference>
<dbReference type="PANTHER" id="PTHR24347">
    <property type="entry name" value="SERINE/THREONINE-PROTEIN KINASE"/>
    <property type="match status" value="1"/>
</dbReference>
<dbReference type="Pfam" id="PF00069">
    <property type="entry name" value="Pkinase"/>
    <property type="match status" value="1"/>
</dbReference>
<dbReference type="SMART" id="SM00220">
    <property type="entry name" value="S_TKc"/>
    <property type="match status" value="1"/>
</dbReference>
<dbReference type="SUPFAM" id="SSF56112">
    <property type="entry name" value="Protein kinase-like (PK-like)"/>
    <property type="match status" value="1"/>
</dbReference>
<dbReference type="PROSITE" id="PS00107">
    <property type="entry name" value="PROTEIN_KINASE_ATP"/>
    <property type="match status" value="1"/>
</dbReference>
<dbReference type="PROSITE" id="PS50011">
    <property type="entry name" value="PROTEIN_KINASE_DOM"/>
    <property type="match status" value="1"/>
</dbReference>
<dbReference type="PROSITE" id="PS00108">
    <property type="entry name" value="PROTEIN_KINASE_ST"/>
    <property type="match status" value="1"/>
</dbReference>
<organism>
    <name type="scientific">Bos taurus</name>
    <name type="common">Bovine</name>
    <dbReference type="NCBI Taxonomy" id="9913"/>
    <lineage>
        <taxon>Eukaryota</taxon>
        <taxon>Metazoa</taxon>
        <taxon>Chordata</taxon>
        <taxon>Craniata</taxon>
        <taxon>Vertebrata</taxon>
        <taxon>Euteleostomi</taxon>
        <taxon>Mammalia</taxon>
        <taxon>Eutheria</taxon>
        <taxon>Laurasiatheria</taxon>
        <taxon>Artiodactyla</taxon>
        <taxon>Ruminantia</taxon>
        <taxon>Pecora</taxon>
        <taxon>Bovidae</taxon>
        <taxon>Bovinae</taxon>
        <taxon>Bos</taxon>
    </lineage>
</organism>
<name>KPSH1_BOVIN</name>
<feature type="initiator methionine" description="Removed">
    <location>
        <position position="1"/>
    </location>
</feature>
<feature type="chain" id="PRO_0000292952" description="Serine/threonine-protein kinase H1">
    <location>
        <begin position="2"/>
        <end position="424"/>
    </location>
</feature>
<feature type="domain" description="Protein kinase" evidence="3">
    <location>
        <begin position="98"/>
        <end position="355"/>
    </location>
</feature>
<feature type="region of interest" description="Disordered" evidence="5">
    <location>
        <begin position="49"/>
        <end position="81"/>
    </location>
</feature>
<feature type="region of interest" description="Disordered" evidence="5">
    <location>
        <begin position="378"/>
        <end position="407"/>
    </location>
</feature>
<feature type="compositionally biased region" description="Polar residues" evidence="5">
    <location>
        <begin position="57"/>
        <end position="72"/>
    </location>
</feature>
<feature type="compositionally biased region" description="Low complexity" evidence="5">
    <location>
        <begin position="385"/>
        <end position="398"/>
    </location>
</feature>
<feature type="active site" description="Proton acceptor" evidence="3 4">
    <location>
        <position position="218"/>
    </location>
</feature>
<feature type="binding site" evidence="3">
    <location>
        <begin position="104"/>
        <end position="112"/>
    </location>
    <ligand>
        <name>ATP</name>
        <dbReference type="ChEBI" id="CHEBI:30616"/>
    </ligand>
</feature>
<feature type="binding site" evidence="3">
    <location>
        <position position="127"/>
    </location>
    <ligand>
        <name>ATP</name>
        <dbReference type="ChEBI" id="CHEBI:30616"/>
    </ligand>
</feature>
<feature type="modified residue" description="Phosphoserine; by autocatalysis" evidence="2">
    <location>
        <position position="380"/>
    </location>
</feature>
<feature type="modified residue" description="Phosphoserine; by autocatalysis" evidence="2">
    <location>
        <position position="381"/>
    </location>
</feature>
<feature type="lipid moiety-binding region" description="N-myristoyl glycine" evidence="1">
    <location>
        <position position="2"/>
    </location>
</feature>
<feature type="lipid moiety-binding region" description="S-palmitoyl cysteine" evidence="1">
    <location>
        <position position="3"/>
    </location>
</feature>
<accession>Q0V7M1</accession>
<gene>
    <name type="primary">PSKH1</name>
</gene>
<proteinExistence type="evidence at transcript level"/>
<sequence length="424" mass="48009">MGCGTSKVLPEPPKDVQLDLVKKVEPFSGTKSDVYKHFITEVDSVGPLKGGFPAASQGANPSPGTPRTSHTEPPSEPPRRARVAKYRAKFDPRVTAKYDIKALIGRGSFSRVVRVEHRATRQPYAIKMIETKYREGREVCESELRVLRRVRHANIIQLVEVFETQERVYMVMELATGGELFDRIIAKGSFTERDATRVLQMVLDGVRYLHALGITHRDLKPENLLYYHPGTDSKIIITDFGLASARKKGDDCLMKTTCGTPEYIAPEVLVRKPYTNSVDMWALGVIAYILLSGTMPFEDDNRTRLYRQILRGKYSYSGEPWPSVSNLAKDFIDRLLTVDPGARMTALQALRHPWVVSMAASSSMKNLHRSISQNLLKRASSRCQSTKSAQSTRSSRSTRSNKSRRVRERELRELNLRYQQQYNG</sequence>